<gene>
    <name type="primary">pyrD</name>
    <name type="ordered locus">BCAH187_A3933</name>
</gene>
<reference key="1">
    <citation type="submission" date="2008-10" db="EMBL/GenBank/DDBJ databases">
        <title>Genome sequence of Bacillus cereus AH187.</title>
        <authorList>
            <person name="Dodson R.J."/>
            <person name="Durkin A.S."/>
            <person name="Rosovitz M.J."/>
            <person name="Rasko D.A."/>
            <person name="Kolsto A.B."/>
            <person name="Okstad O.A."/>
            <person name="Ravel J."/>
            <person name="Sutton G."/>
        </authorList>
    </citation>
    <scope>NUCLEOTIDE SEQUENCE [LARGE SCALE GENOMIC DNA]</scope>
    <source>
        <strain>AH187</strain>
    </source>
</reference>
<name>PYRDB_BACC7</name>
<protein>
    <recommendedName>
        <fullName>Dihydroorotate dehydrogenase B (NAD(+)), catalytic subunit</fullName>
        <shortName>DHOD B</shortName>
        <shortName>DHODase B</shortName>
        <shortName>DHOdehase B</shortName>
        <ecNumber>1.3.1.14</ecNumber>
    </recommendedName>
    <alternativeName>
        <fullName>Dihydroorotate oxidase B</fullName>
    </alternativeName>
    <alternativeName>
        <fullName>Orotate reductase (NADH)</fullName>
    </alternativeName>
</protein>
<dbReference type="EC" id="1.3.1.14"/>
<dbReference type="EMBL" id="CP001177">
    <property type="protein sequence ID" value="ACJ80923.1"/>
    <property type="molecule type" value="Genomic_DNA"/>
</dbReference>
<dbReference type="SMR" id="B7HLL8"/>
<dbReference type="KEGG" id="bcr:BCAH187_A3933"/>
<dbReference type="HOGENOM" id="CLU_042042_0_0_9"/>
<dbReference type="UniPathway" id="UPA00070">
    <property type="reaction ID" value="UER00945"/>
</dbReference>
<dbReference type="Proteomes" id="UP000002214">
    <property type="component" value="Chromosome"/>
</dbReference>
<dbReference type="GO" id="GO:0005737">
    <property type="term" value="C:cytoplasm"/>
    <property type="evidence" value="ECO:0007669"/>
    <property type="project" value="UniProtKB-SubCell"/>
</dbReference>
<dbReference type="GO" id="GO:0004589">
    <property type="term" value="F:dihydroorotate dehydrogenase (NAD+) activity"/>
    <property type="evidence" value="ECO:0007669"/>
    <property type="project" value="UniProtKB-EC"/>
</dbReference>
<dbReference type="GO" id="GO:0006207">
    <property type="term" value="P:'de novo' pyrimidine nucleobase biosynthetic process"/>
    <property type="evidence" value="ECO:0007669"/>
    <property type="project" value="InterPro"/>
</dbReference>
<dbReference type="GO" id="GO:0044205">
    <property type="term" value="P:'de novo' UMP biosynthetic process"/>
    <property type="evidence" value="ECO:0007669"/>
    <property type="project" value="UniProtKB-UniRule"/>
</dbReference>
<dbReference type="CDD" id="cd04740">
    <property type="entry name" value="DHOD_1B_like"/>
    <property type="match status" value="1"/>
</dbReference>
<dbReference type="FunFam" id="3.20.20.70:FF:000069">
    <property type="entry name" value="Dihydroorotate dehydrogenase"/>
    <property type="match status" value="1"/>
</dbReference>
<dbReference type="Gene3D" id="3.20.20.70">
    <property type="entry name" value="Aldolase class I"/>
    <property type="match status" value="1"/>
</dbReference>
<dbReference type="HAMAP" id="MF_00224">
    <property type="entry name" value="DHO_dh_type1"/>
    <property type="match status" value="1"/>
</dbReference>
<dbReference type="InterPro" id="IPR013785">
    <property type="entry name" value="Aldolase_TIM"/>
</dbReference>
<dbReference type="InterPro" id="IPR050074">
    <property type="entry name" value="DHO_dehydrogenase"/>
</dbReference>
<dbReference type="InterPro" id="IPR033888">
    <property type="entry name" value="DHOD_1B"/>
</dbReference>
<dbReference type="InterPro" id="IPR024920">
    <property type="entry name" value="Dihydroorotate_DH_1"/>
</dbReference>
<dbReference type="InterPro" id="IPR012135">
    <property type="entry name" value="Dihydroorotate_DH_1_2"/>
</dbReference>
<dbReference type="InterPro" id="IPR005720">
    <property type="entry name" value="Dihydroorotate_DH_cat"/>
</dbReference>
<dbReference type="InterPro" id="IPR001295">
    <property type="entry name" value="Dihydroorotate_DH_CS"/>
</dbReference>
<dbReference type="InterPro" id="IPR049622">
    <property type="entry name" value="Dihydroorotate_DH_I"/>
</dbReference>
<dbReference type="NCBIfam" id="NF005574">
    <property type="entry name" value="PRK07259.1"/>
    <property type="match status" value="1"/>
</dbReference>
<dbReference type="NCBIfam" id="TIGR01037">
    <property type="entry name" value="pyrD_sub1_fam"/>
    <property type="match status" value="1"/>
</dbReference>
<dbReference type="PANTHER" id="PTHR48109:SF1">
    <property type="entry name" value="DIHYDROOROTATE DEHYDROGENASE (FUMARATE)"/>
    <property type="match status" value="1"/>
</dbReference>
<dbReference type="PANTHER" id="PTHR48109">
    <property type="entry name" value="DIHYDROOROTATE DEHYDROGENASE (QUINONE), MITOCHONDRIAL-RELATED"/>
    <property type="match status" value="1"/>
</dbReference>
<dbReference type="Pfam" id="PF01180">
    <property type="entry name" value="DHO_dh"/>
    <property type="match status" value="1"/>
</dbReference>
<dbReference type="PIRSF" id="PIRSF000164">
    <property type="entry name" value="DHO_oxidase"/>
    <property type="match status" value="1"/>
</dbReference>
<dbReference type="SUPFAM" id="SSF51395">
    <property type="entry name" value="FMN-linked oxidoreductases"/>
    <property type="match status" value="1"/>
</dbReference>
<dbReference type="PROSITE" id="PS00911">
    <property type="entry name" value="DHODEHASE_1"/>
    <property type="match status" value="1"/>
</dbReference>
<dbReference type="PROSITE" id="PS00912">
    <property type="entry name" value="DHODEHASE_2"/>
    <property type="match status" value="1"/>
</dbReference>
<organism>
    <name type="scientific">Bacillus cereus (strain AH187)</name>
    <dbReference type="NCBI Taxonomy" id="405534"/>
    <lineage>
        <taxon>Bacteria</taxon>
        <taxon>Bacillati</taxon>
        <taxon>Bacillota</taxon>
        <taxon>Bacilli</taxon>
        <taxon>Bacillales</taxon>
        <taxon>Bacillaceae</taxon>
        <taxon>Bacillus</taxon>
        <taxon>Bacillus cereus group</taxon>
    </lineage>
</organism>
<comment type="function">
    <text evidence="1">Catalyzes the conversion of dihydroorotate to orotate with NAD(+) as electron acceptor.</text>
</comment>
<comment type="catalytic activity">
    <reaction>
        <text>(S)-dihydroorotate + NAD(+) = orotate + NADH + H(+)</text>
        <dbReference type="Rhea" id="RHEA:13513"/>
        <dbReference type="ChEBI" id="CHEBI:15378"/>
        <dbReference type="ChEBI" id="CHEBI:30839"/>
        <dbReference type="ChEBI" id="CHEBI:30864"/>
        <dbReference type="ChEBI" id="CHEBI:57540"/>
        <dbReference type="ChEBI" id="CHEBI:57945"/>
        <dbReference type="EC" id="1.3.1.14"/>
    </reaction>
</comment>
<comment type="cofactor">
    <cofactor evidence="1">
        <name>FMN</name>
        <dbReference type="ChEBI" id="CHEBI:58210"/>
    </cofactor>
    <text evidence="1">Binds 1 FMN per subunit.</text>
</comment>
<comment type="pathway">
    <text>Pyrimidine metabolism; UMP biosynthesis via de novo pathway; orotate from (S)-dihydroorotate (NAD(+) route): step 1/1.</text>
</comment>
<comment type="subunit">
    <text evidence="1">Heterotetramer of 2 PyrK and 2 PyrD type B subunits.</text>
</comment>
<comment type="subcellular location">
    <subcellularLocation>
        <location evidence="1">Cytoplasm</location>
    </subcellularLocation>
</comment>
<comment type="similarity">
    <text evidence="2">Belongs to the dihydroorotate dehydrogenase family. Type 1 subfamily.</text>
</comment>
<sequence length="309" mass="32990">MNRLQVELPGLSLKNPIIPASGCFGFGREYAQFYDLSVLGSIMIKATTEQPRYGNPTPRVAETPGGMLNAIGLQNPGLEKVMNSELPWLEQFDLPIIANVAGSQAEDYVAVAKEISKAPNVHALELNISCPNVKTGGIAFGTNPEIAADLTKRVKEVSEVPVYVKLSPNVANIVEIAKAIENAGADGLTMINTLLGMRLDLKTAKPILANRTGGLSGPAIKPVAIRMVHEVSQAVNIPIIGMGGIETAEDVIEFFYAGASAVAVGTANFIDPFVCPTIIEELPALLDELGFDHISECQGRSWKQTCHSR</sequence>
<accession>B7HLL8</accession>
<keyword id="KW-0963">Cytoplasm</keyword>
<keyword id="KW-0285">Flavoprotein</keyword>
<keyword id="KW-0288">FMN</keyword>
<keyword id="KW-0520">NAD</keyword>
<keyword id="KW-0560">Oxidoreductase</keyword>
<keyword id="KW-0665">Pyrimidine biosynthesis</keyword>
<proteinExistence type="inferred from homology"/>
<evidence type="ECO:0000250" key="1"/>
<evidence type="ECO:0000305" key="2"/>
<feature type="chain" id="PRO_1000195042" description="Dihydroorotate dehydrogenase B (NAD(+)), catalytic subunit">
    <location>
        <begin position="1"/>
        <end position="309"/>
    </location>
</feature>
<feature type="active site" description="Nucleophile">
    <location>
        <position position="130"/>
    </location>
</feature>
<feature type="binding site" evidence="1">
    <location>
        <position position="21"/>
    </location>
    <ligand>
        <name>FMN</name>
        <dbReference type="ChEBI" id="CHEBI:58210"/>
    </ligand>
</feature>
<feature type="binding site" evidence="1">
    <location>
        <begin position="45"/>
        <end position="46"/>
    </location>
    <ligand>
        <name>FMN</name>
        <dbReference type="ChEBI" id="CHEBI:58210"/>
    </ligand>
</feature>
<feature type="binding site" evidence="1">
    <location>
        <position position="45"/>
    </location>
    <ligand>
        <name>substrate</name>
    </ligand>
</feature>
<feature type="binding site" evidence="1">
    <location>
        <begin position="69"/>
        <end position="73"/>
    </location>
    <ligand>
        <name>substrate</name>
    </ligand>
</feature>
<feature type="binding site" evidence="1">
    <location>
        <position position="99"/>
    </location>
    <ligand>
        <name>FMN</name>
        <dbReference type="ChEBI" id="CHEBI:58210"/>
    </ligand>
</feature>
<feature type="binding site" evidence="1">
    <location>
        <position position="127"/>
    </location>
    <ligand>
        <name>FMN</name>
        <dbReference type="ChEBI" id="CHEBI:58210"/>
    </ligand>
</feature>
<feature type="binding site" evidence="1">
    <location>
        <position position="127"/>
    </location>
    <ligand>
        <name>substrate</name>
    </ligand>
</feature>
<feature type="binding site" evidence="1">
    <location>
        <position position="165"/>
    </location>
    <ligand>
        <name>FMN</name>
        <dbReference type="ChEBI" id="CHEBI:58210"/>
    </ligand>
</feature>
<feature type="binding site" evidence="1">
    <location>
        <position position="191"/>
    </location>
    <ligand>
        <name>FMN</name>
        <dbReference type="ChEBI" id="CHEBI:58210"/>
    </ligand>
</feature>
<feature type="binding site" evidence="1">
    <location>
        <begin position="192"/>
        <end position="193"/>
    </location>
    <ligand>
        <name>substrate</name>
    </ligand>
</feature>
<feature type="binding site" evidence="1">
    <location>
        <position position="217"/>
    </location>
    <ligand>
        <name>FMN</name>
        <dbReference type="ChEBI" id="CHEBI:58210"/>
    </ligand>
</feature>
<feature type="binding site" evidence="1">
    <location>
        <begin position="243"/>
        <end position="244"/>
    </location>
    <ligand>
        <name>FMN</name>
        <dbReference type="ChEBI" id="CHEBI:58210"/>
    </ligand>
</feature>
<feature type="binding site" evidence="1">
    <location>
        <begin position="265"/>
        <end position="266"/>
    </location>
    <ligand>
        <name>FMN</name>
        <dbReference type="ChEBI" id="CHEBI:58210"/>
    </ligand>
</feature>